<accession>A3DH98</accession>
<keyword id="KW-0002">3D-structure</keyword>
<keyword id="KW-0963">Cytoplasm</keyword>
<keyword id="KW-0238">DNA-binding</keyword>
<keyword id="KW-1185">Reference proteome</keyword>
<keyword id="KW-0731">Sigma factor</keyword>
<keyword id="KW-0804">Transcription</keyword>
<keyword id="KW-0805">Transcription regulation</keyword>
<organism>
    <name type="scientific">Acetivibrio thermocellus (strain ATCC 27405 / DSM 1237 / JCM 9322 / NBRC 103400 / NCIMB 10682 / NRRL B-4536 / VPI 7372)</name>
    <name type="common">Clostridium thermocellum</name>
    <dbReference type="NCBI Taxonomy" id="203119"/>
    <lineage>
        <taxon>Bacteria</taxon>
        <taxon>Bacillati</taxon>
        <taxon>Bacillota</taxon>
        <taxon>Clostridia</taxon>
        <taxon>Eubacteriales</taxon>
        <taxon>Oscillospiraceae</taxon>
        <taxon>Acetivibrio</taxon>
    </lineage>
</organism>
<gene>
    <name evidence="5" type="primary">sigI6</name>
    <name evidence="9" type="ordered locus">Cthe_2120</name>
</gene>
<dbReference type="EMBL" id="CP000568">
    <property type="protein sequence ID" value="ABN53327.1"/>
    <property type="molecule type" value="Genomic_DNA"/>
</dbReference>
<dbReference type="PDB" id="8I24">
    <property type="method" value="EM"/>
    <property type="resolution" value="3.36 A"/>
    <property type="chains" value="F=1-253"/>
</dbReference>
<dbReference type="PDBsum" id="8I24"/>
<dbReference type="EMDB" id="EMD-35131"/>
<dbReference type="SMR" id="A3DH98"/>
<dbReference type="DIP" id="DIP-59453N"/>
<dbReference type="IntAct" id="A3DH98">
    <property type="interactions" value="1"/>
</dbReference>
<dbReference type="STRING" id="203119.Cthe_2120"/>
<dbReference type="GeneID" id="35803375"/>
<dbReference type="KEGG" id="cth:Cthe_2120"/>
<dbReference type="eggNOG" id="COG1191">
    <property type="taxonomic scope" value="Bacteria"/>
</dbReference>
<dbReference type="HOGENOM" id="CLU_082361_0_0_9"/>
<dbReference type="OrthoDB" id="3190733at2"/>
<dbReference type="Proteomes" id="UP000002145">
    <property type="component" value="Chromosome"/>
</dbReference>
<dbReference type="GO" id="GO:0005737">
    <property type="term" value="C:cytoplasm"/>
    <property type="evidence" value="ECO:0007669"/>
    <property type="project" value="UniProtKB-SubCell"/>
</dbReference>
<dbReference type="GO" id="GO:0003677">
    <property type="term" value="F:DNA binding"/>
    <property type="evidence" value="ECO:0007669"/>
    <property type="project" value="UniProtKB-UniRule"/>
</dbReference>
<dbReference type="GO" id="GO:0016987">
    <property type="term" value="F:sigma factor activity"/>
    <property type="evidence" value="ECO:0007669"/>
    <property type="project" value="UniProtKB-UniRule"/>
</dbReference>
<dbReference type="GO" id="GO:0006352">
    <property type="term" value="P:DNA-templated transcription initiation"/>
    <property type="evidence" value="ECO:0007669"/>
    <property type="project" value="UniProtKB-UniRule"/>
</dbReference>
<dbReference type="Gene3D" id="1.10.1740.10">
    <property type="match status" value="1"/>
</dbReference>
<dbReference type="HAMAP" id="MF_02064">
    <property type="entry name" value="Sigma70_SigI"/>
    <property type="match status" value="1"/>
</dbReference>
<dbReference type="InterPro" id="IPR018247">
    <property type="entry name" value="EF_Hand_1_Ca_BS"/>
</dbReference>
<dbReference type="InterPro" id="IPR014244">
    <property type="entry name" value="RNA_pol_sigma-I"/>
</dbReference>
<dbReference type="InterPro" id="IPR013325">
    <property type="entry name" value="RNA_pol_sigma_r2"/>
</dbReference>
<dbReference type="NCBIfam" id="NF006173">
    <property type="entry name" value="PRK08311.2-1"/>
    <property type="match status" value="1"/>
</dbReference>
<dbReference type="NCBIfam" id="TIGR02895">
    <property type="entry name" value="spore_sigI"/>
    <property type="match status" value="1"/>
</dbReference>
<dbReference type="PIRSF" id="PIRSF038953">
    <property type="entry name" value="SigI"/>
    <property type="match status" value="1"/>
</dbReference>
<dbReference type="SUPFAM" id="SSF88946">
    <property type="entry name" value="Sigma2 domain of RNA polymerase sigma factors"/>
    <property type="match status" value="1"/>
</dbReference>
<dbReference type="PROSITE" id="PS00018">
    <property type="entry name" value="EF_HAND_1"/>
    <property type="match status" value="1"/>
</dbReference>
<evidence type="ECO:0000250" key="1">
    <source>
        <dbReference type="UniProtKB" id="A3DBH0"/>
    </source>
</evidence>
<evidence type="ECO:0000255" key="2">
    <source>
        <dbReference type="HAMAP-Rule" id="MF_02064"/>
    </source>
</evidence>
<evidence type="ECO:0000269" key="3">
    <source>
    </source>
</evidence>
<evidence type="ECO:0000269" key="4">
    <source>
    </source>
</evidence>
<evidence type="ECO:0000303" key="5">
    <source>
    </source>
</evidence>
<evidence type="ECO:0000305" key="6"/>
<evidence type="ECO:0000305" key="7">
    <source>
    </source>
</evidence>
<evidence type="ECO:0000305" key="8">
    <source>
    </source>
</evidence>
<evidence type="ECO:0000312" key="9">
    <source>
        <dbReference type="EMBL" id="ABN53327.1"/>
    </source>
</evidence>
<evidence type="ECO:0007829" key="10">
    <source>
        <dbReference type="PDB" id="8I24"/>
    </source>
</evidence>
<protein>
    <recommendedName>
        <fullName evidence="6">RNA polymerase sigma factor SigI6</fullName>
    </recommendedName>
</protein>
<feature type="chain" id="PRO_0000436520" description="RNA polymerase sigma factor SigI6">
    <location>
        <begin position="1"/>
        <end position="253"/>
    </location>
</feature>
<feature type="DNA-binding region" description="H-T-H motif" evidence="2">
    <location>
        <begin position="203"/>
        <end position="222"/>
    </location>
</feature>
<feature type="short sequence motif" description="Polymerase core binding" evidence="2">
    <location>
        <begin position="63"/>
        <end position="76"/>
    </location>
</feature>
<feature type="helix" evidence="10">
    <location>
        <begin position="16"/>
        <end position="27"/>
    </location>
</feature>
<feature type="helix" evidence="10">
    <location>
        <begin position="32"/>
        <end position="52"/>
    </location>
</feature>
<feature type="strand" evidence="10">
    <location>
        <begin position="53"/>
        <end position="55"/>
    </location>
</feature>
<feature type="turn" evidence="10">
    <location>
        <begin position="59"/>
        <end position="61"/>
    </location>
</feature>
<feature type="helix" evidence="10">
    <location>
        <begin position="63"/>
        <end position="78"/>
    </location>
</feature>
<feature type="helix" evidence="10">
    <location>
        <begin position="87"/>
        <end position="106"/>
    </location>
</feature>
<feature type="helix" evidence="10">
    <location>
        <begin position="107"/>
        <end position="111"/>
    </location>
</feature>
<feature type="strand" evidence="10">
    <location>
        <begin position="112"/>
        <end position="114"/>
    </location>
</feature>
<feature type="helix" evidence="10">
    <location>
        <begin position="115"/>
        <end position="117"/>
    </location>
</feature>
<feature type="helix" evidence="10">
    <location>
        <begin position="123"/>
        <end position="128"/>
    </location>
</feature>
<feature type="helix" evidence="10">
    <location>
        <begin position="136"/>
        <end position="156"/>
    </location>
</feature>
<feature type="helix" evidence="10">
    <location>
        <begin position="161"/>
        <end position="166"/>
    </location>
</feature>
<feature type="helix" evidence="10">
    <location>
        <begin position="172"/>
        <end position="188"/>
    </location>
</feature>
<feature type="helix" evidence="10">
    <location>
        <begin position="193"/>
        <end position="196"/>
    </location>
</feature>
<feature type="helix" evidence="10">
    <location>
        <begin position="204"/>
        <end position="210"/>
    </location>
</feature>
<feature type="helix" evidence="10">
    <location>
        <begin position="215"/>
        <end position="231"/>
    </location>
</feature>
<feature type="helix" evidence="10">
    <location>
        <begin position="235"/>
        <end position="244"/>
    </location>
</feature>
<name>SIGI6_ACET2</name>
<comment type="function">
    <text evidence="2 4 7">Sigma factors are initiation factors that promote the attachment of RNA polymerase to specific initiation sites and are then released (By similarity). This sigma factor is involved in regulation of cellulosomal genes via an external polysaccharide-sensing mechanism (Probable). Recognizes the predicted promoters associated with sigI6 itself, xyn11B, xyn10D, xyn10Z, xyn10Y, cel9V, cseP, sigI1, cipA, and rsgI5 (PubMed:26731480).</text>
</comment>
<comment type="activity regulation">
    <text evidence="1 2">Negatively regulated by the anti-sigma-I factor RsgI6 (By similarity). Binding of the polysaccharide substrate to RsgI6 may lead to the release and activation of SigI6 (By similarity).</text>
</comment>
<comment type="subunit">
    <text evidence="2 3">Interacts with RsgI6.</text>
</comment>
<comment type="subcellular location">
    <subcellularLocation>
        <location evidence="2">Cytoplasm</location>
    </subcellularLocation>
</comment>
<comment type="induction">
    <text evidence="3 8">Autoregulated (Probable). Up-regulated in the presence of xylan (PubMed:20937888).</text>
</comment>
<comment type="similarity">
    <text evidence="2">Belongs to the sigma-70 factor family. SigI subfamily.</text>
</comment>
<proteinExistence type="evidence at protein level"/>
<sequence>MDWHFQGTNDDREHTKRIIIEYLNRIKAGDDSAREEFILRFRPFILKLVYKATDRHVEPENSEEYSVALLAFNEAINAYDEEKHSNFLVFSEQVINRRLIDYKRKNHKNKMVYPFSYFENEDIKLERTLSDADGNNAIERLEFTDEIRLFKSELASFDITFKDLLSCTPKHRDSRELLINIAKKIASNDGLYEKLKKTKKLPTLELLKLAKVSRRTIERNKKYIIAVSLILRSNLEIFKEYAAGIQEKEVDLR</sequence>
<reference key="1">
    <citation type="submission" date="2007-02" db="EMBL/GenBank/DDBJ databases">
        <title>Complete sequence of Clostridium thermocellum ATCC 27405.</title>
        <authorList>
            <consortium name="US DOE Joint Genome Institute"/>
            <person name="Copeland A."/>
            <person name="Lucas S."/>
            <person name="Lapidus A."/>
            <person name="Barry K."/>
            <person name="Detter J.C."/>
            <person name="Glavina del Rio T."/>
            <person name="Hammon N."/>
            <person name="Israni S."/>
            <person name="Dalin E."/>
            <person name="Tice H."/>
            <person name="Pitluck S."/>
            <person name="Chertkov O."/>
            <person name="Brettin T."/>
            <person name="Bruce D."/>
            <person name="Han C."/>
            <person name="Tapia R."/>
            <person name="Gilna P."/>
            <person name="Schmutz J."/>
            <person name="Larimer F."/>
            <person name="Land M."/>
            <person name="Hauser L."/>
            <person name="Kyrpides N."/>
            <person name="Mikhailova N."/>
            <person name="Wu J.H.D."/>
            <person name="Newcomb M."/>
            <person name="Richardson P."/>
        </authorList>
    </citation>
    <scope>NUCLEOTIDE SEQUENCE [LARGE SCALE GENOMIC DNA]</scope>
    <source>
        <strain>ATCC 27405 / DSM 1237 / JCM 9322 / NBRC 103400 / NCIMB 10682 / NRRL B-4536 / VPI 7372</strain>
    </source>
</reference>
<reference key="2">
    <citation type="journal article" date="2010" name="FEMS Microbiol. Lett.">
        <title>The unique set of putative membrane-associated anti-sigma factors in Clostridium thermocellum suggests a novel extracellular carbohydrate-sensing mechanism involved in gene regulation.</title>
        <authorList>
            <person name="Kahel-Raifer H."/>
            <person name="Jindou S."/>
            <person name="Bahari L."/>
            <person name="Nataf Y."/>
            <person name="Shoham Y."/>
            <person name="Bayer E.A."/>
            <person name="Borovok I."/>
            <person name="Lamed R."/>
        </authorList>
    </citation>
    <scope>NOMENCLATURE</scope>
    <source>
        <strain>ATCC 27405 / DSM 1237 / JCM 9322 / NBRC 103400 / NCIMB 10682 / NRRL B-4536 / VPI 7372</strain>
    </source>
</reference>
<reference key="3">
    <citation type="journal article" date="2010" name="Proc. Natl. Acad. Sci. U.S.A.">
        <title>Clostridium thermocellum cellulosomal genes are regulated by extracytoplasmic polysaccharides via alternative sigma factors.</title>
        <authorList>
            <person name="Nataf Y."/>
            <person name="Bahari L."/>
            <person name="Kahel-Raifer H."/>
            <person name="Borovok I."/>
            <person name="Lamed R."/>
            <person name="Bayer E.A."/>
            <person name="Sonenshein A.L."/>
            <person name="Shoham Y."/>
        </authorList>
    </citation>
    <scope>FUNCTION</scope>
    <scope>INTERACTION WITH RSGI6</scope>
    <scope>INDUCTION</scope>
</reference>
<reference key="4">
    <citation type="journal article" date="2016" name="PLoS ONE">
        <title>Decoding biomass-sensing regulons of Clostridium thermocellum alternative sigma-I factors in a heterologous Bacillus subtilis host system.</title>
        <authorList>
            <person name="Munoz-Gutierrez I."/>
            <person name="Ortiz de Ora L."/>
            <person name="Rozman Grinberg I."/>
            <person name="Garty Y."/>
            <person name="Bayer E.A."/>
            <person name="Shoham Y."/>
            <person name="Lamed R."/>
            <person name="Borovok I."/>
        </authorList>
    </citation>
    <scope>FUNCTION</scope>
    <scope>INDUCTION</scope>
</reference>